<dbReference type="EMBL" id="Y08678">
    <property type="protein sequence ID" value="CAA69934.1"/>
    <property type="molecule type" value="mRNA"/>
</dbReference>
<dbReference type="PIR" id="T09613">
    <property type="entry name" value="T09613"/>
</dbReference>
<dbReference type="SMR" id="O24076"/>
<dbReference type="GO" id="GO:1990904">
    <property type="term" value="C:ribonucleoprotein complex"/>
    <property type="evidence" value="ECO:0007669"/>
    <property type="project" value="UniProtKB-KW"/>
</dbReference>
<dbReference type="GO" id="GO:0005840">
    <property type="term" value="C:ribosome"/>
    <property type="evidence" value="ECO:0007669"/>
    <property type="project" value="UniProtKB-KW"/>
</dbReference>
<dbReference type="GO" id="GO:0043022">
    <property type="term" value="F:ribosome binding"/>
    <property type="evidence" value="ECO:0007669"/>
    <property type="project" value="InterPro"/>
</dbReference>
<dbReference type="GO" id="GO:0045182">
    <property type="term" value="F:translation regulator activity"/>
    <property type="evidence" value="ECO:0007669"/>
    <property type="project" value="InterPro"/>
</dbReference>
<dbReference type="CDD" id="cd00200">
    <property type="entry name" value="WD40"/>
    <property type="match status" value="1"/>
</dbReference>
<dbReference type="FunFam" id="2.130.10.10:FF:000018">
    <property type="entry name" value="Receptor for activated C kinase 1"/>
    <property type="match status" value="1"/>
</dbReference>
<dbReference type="Gene3D" id="2.130.10.10">
    <property type="entry name" value="YVTN repeat-like/Quinoprotein amine dehydrogenase"/>
    <property type="match status" value="1"/>
</dbReference>
<dbReference type="InterPro" id="IPR020472">
    <property type="entry name" value="G-protein_beta_WD-40_rep"/>
</dbReference>
<dbReference type="InterPro" id="IPR045223">
    <property type="entry name" value="RACK1-like"/>
</dbReference>
<dbReference type="InterPro" id="IPR015943">
    <property type="entry name" value="WD40/YVTN_repeat-like_dom_sf"/>
</dbReference>
<dbReference type="InterPro" id="IPR019775">
    <property type="entry name" value="WD40_repeat_CS"/>
</dbReference>
<dbReference type="InterPro" id="IPR036322">
    <property type="entry name" value="WD40_repeat_dom_sf"/>
</dbReference>
<dbReference type="InterPro" id="IPR001680">
    <property type="entry name" value="WD40_rpt"/>
</dbReference>
<dbReference type="PANTHER" id="PTHR19868">
    <property type="entry name" value="RECEPTOR FOR ACTIVATED PROTEIN KINASE C RACK1"/>
    <property type="match status" value="1"/>
</dbReference>
<dbReference type="Pfam" id="PF00400">
    <property type="entry name" value="WD40"/>
    <property type="match status" value="7"/>
</dbReference>
<dbReference type="PRINTS" id="PR00320">
    <property type="entry name" value="GPROTEINBRPT"/>
</dbReference>
<dbReference type="SMART" id="SM00320">
    <property type="entry name" value="WD40"/>
    <property type="match status" value="7"/>
</dbReference>
<dbReference type="SUPFAM" id="SSF50978">
    <property type="entry name" value="WD40 repeat-like"/>
    <property type="match status" value="1"/>
</dbReference>
<dbReference type="PROSITE" id="PS00678">
    <property type="entry name" value="WD_REPEATS_1"/>
    <property type="match status" value="4"/>
</dbReference>
<dbReference type="PROSITE" id="PS50082">
    <property type="entry name" value="WD_REPEATS_2"/>
    <property type="match status" value="6"/>
</dbReference>
<dbReference type="PROSITE" id="PS50294">
    <property type="entry name" value="WD_REPEATS_REGION"/>
    <property type="match status" value="1"/>
</dbReference>
<name>GBLP_MEDSA</name>
<reference key="1">
    <citation type="journal article" date="1997" name="Plant Mol. Biol.">
        <title>Cloning of a WD-repeat-containing gene from alfalfa (Medicago sativa): a role in hormone-mediated cell division?</title>
        <authorList>
            <person name="McKhann H.I."/>
            <person name="Frugier F."/>
            <person name="Petrovics G."/>
            <person name="Coba de la Pena T."/>
            <person name="Jurkevitch E."/>
            <person name="Brown S."/>
            <person name="Kondorosi E."/>
            <person name="Kondorosi A."/>
            <person name="Crespi M."/>
        </authorList>
    </citation>
    <scope>NUCLEOTIDE SEQUENCE [MRNA]</scope>
    <source>
        <strain>cv. Varia</strain>
        <tissue>Root nodule</tissue>
    </source>
</reference>
<feature type="chain" id="PRO_0000127751" description="Small ribosomal subunit protein RACK1">
    <location>
        <begin position="1"/>
        <end position="325"/>
    </location>
</feature>
<feature type="repeat" description="WD 1">
    <location>
        <begin position="13"/>
        <end position="44"/>
    </location>
</feature>
<feature type="repeat" description="WD 2">
    <location>
        <begin position="61"/>
        <end position="91"/>
    </location>
</feature>
<feature type="repeat" description="WD 3">
    <location>
        <begin position="103"/>
        <end position="133"/>
    </location>
</feature>
<feature type="repeat" description="WD 4">
    <location>
        <begin position="147"/>
        <end position="179"/>
    </location>
</feature>
<feature type="repeat" description="WD 5">
    <location>
        <begin position="191"/>
        <end position="221"/>
    </location>
</feature>
<feature type="repeat" description="WD 6">
    <location>
        <begin position="232"/>
        <end position="261"/>
    </location>
</feature>
<feature type="repeat" description="WD 7">
    <location>
        <begin position="291"/>
        <end position="321"/>
    </location>
</feature>
<proteinExistence type="evidence at transcript level"/>
<sequence>MAEGLVLRGTMRAHTDVVTAIATPIDNSDMIVTASRDKSIILWHLTKEDKTYGVPRRRLTGHSHFVQDVVLSSDGQFALSGSWDGELRLWDLNAGTSARRFVGHTKDVLSVAFSIDNRQIVSASRDRTIKLWNTLGECKYTIQDGDAHSDWVSCVRFSPSTPQPTIVSASWDRTVKVWNLTNCKLRNTLAGHSGYVNTVAVSPDGSLCASGGKDGVILLWDLAEGKRLYSLDAGSIIHALCFSPNRYWLCAATESSIKIWDLESKSIVEDLKVDLKTEADAAIGGDTTTKKKVIYCTSLNWSADGSTLFSGYTDGVVRVWGIGRY</sequence>
<comment type="function">
    <text>Plays a role in hormone-mediated cell division.</text>
</comment>
<comment type="similarity">
    <text evidence="1">Belongs to the WD repeat G protein beta family. Ribosomal protein RACK1 subfamily.</text>
</comment>
<accession>O24076</accession>
<keyword id="KW-0677">Repeat</keyword>
<keyword id="KW-0687">Ribonucleoprotein</keyword>
<keyword id="KW-0689">Ribosomal protein</keyword>
<keyword id="KW-0853">WD repeat</keyword>
<protein>
    <recommendedName>
        <fullName evidence="1">Small ribosomal subunit protein RACK1</fullName>
    </recommendedName>
    <alternativeName>
        <fullName>Guanine nucleotide-binding protein subunit beta-like protein</fullName>
    </alternativeName>
</protein>
<evidence type="ECO:0000305" key="1"/>
<organism>
    <name type="scientific">Medicago sativa</name>
    <name type="common">Alfalfa</name>
    <dbReference type="NCBI Taxonomy" id="3879"/>
    <lineage>
        <taxon>Eukaryota</taxon>
        <taxon>Viridiplantae</taxon>
        <taxon>Streptophyta</taxon>
        <taxon>Embryophyta</taxon>
        <taxon>Tracheophyta</taxon>
        <taxon>Spermatophyta</taxon>
        <taxon>Magnoliopsida</taxon>
        <taxon>eudicotyledons</taxon>
        <taxon>Gunneridae</taxon>
        <taxon>Pentapetalae</taxon>
        <taxon>rosids</taxon>
        <taxon>fabids</taxon>
        <taxon>Fabales</taxon>
        <taxon>Fabaceae</taxon>
        <taxon>Papilionoideae</taxon>
        <taxon>50 kb inversion clade</taxon>
        <taxon>NPAAA clade</taxon>
        <taxon>Hologalegina</taxon>
        <taxon>IRL clade</taxon>
        <taxon>Trifolieae</taxon>
        <taxon>Medicago</taxon>
    </lineage>
</organism>
<gene>
    <name type="primary">GB1</name>
</gene>